<gene>
    <name evidence="1" type="primary">bchB</name>
    <name type="ordered locus">M446_3719</name>
</gene>
<proteinExistence type="inferred from homology"/>
<keyword id="KW-0004">4Fe-4S</keyword>
<keyword id="KW-0067">ATP-binding</keyword>
<keyword id="KW-0077">Bacteriochlorophyll biosynthesis</keyword>
<keyword id="KW-0149">Chlorophyll biosynthesis</keyword>
<keyword id="KW-0408">Iron</keyword>
<keyword id="KW-0411">Iron-sulfur</keyword>
<keyword id="KW-0479">Metal-binding</keyword>
<keyword id="KW-0547">Nucleotide-binding</keyword>
<keyword id="KW-0560">Oxidoreductase</keyword>
<keyword id="KW-0602">Photosynthesis</keyword>
<reference key="1">
    <citation type="submission" date="2008-02" db="EMBL/GenBank/DDBJ databases">
        <title>Complete sequence of chromosome of Methylobacterium sp. 4-46.</title>
        <authorList>
            <consortium name="US DOE Joint Genome Institute"/>
            <person name="Copeland A."/>
            <person name="Lucas S."/>
            <person name="Lapidus A."/>
            <person name="Glavina del Rio T."/>
            <person name="Dalin E."/>
            <person name="Tice H."/>
            <person name="Bruce D."/>
            <person name="Goodwin L."/>
            <person name="Pitluck S."/>
            <person name="Chertkov O."/>
            <person name="Brettin T."/>
            <person name="Detter J.C."/>
            <person name="Han C."/>
            <person name="Kuske C.R."/>
            <person name="Schmutz J."/>
            <person name="Larimer F."/>
            <person name="Land M."/>
            <person name="Hauser L."/>
            <person name="Kyrpides N."/>
            <person name="Ivanova N."/>
            <person name="Marx C.J."/>
            <person name="Richardson P."/>
        </authorList>
    </citation>
    <scope>NUCLEOTIDE SEQUENCE [LARGE SCALE GENOMIC DNA]</scope>
    <source>
        <strain>4-46</strain>
    </source>
</reference>
<dbReference type="EC" id="1.3.7.7" evidence="1"/>
<dbReference type="EMBL" id="CP000943">
    <property type="protein sequence ID" value="ACA18099.1"/>
    <property type="molecule type" value="Genomic_DNA"/>
</dbReference>
<dbReference type="RefSeq" id="WP_012333498.1">
    <property type="nucleotide sequence ID" value="NC_010511.1"/>
</dbReference>
<dbReference type="SMR" id="B0UDK6"/>
<dbReference type="STRING" id="426117.M446_3719"/>
<dbReference type="KEGG" id="met:M446_3719"/>
<dbReference type="eggNOG" id="COG2710">
    <property type="taxonomic scope" value="Bacteria"/>
</dbReference>
<dbReference type="HOGENOM" id="CLU_025470_0_0_5"/>
<dbReference type="UniPathway" id="UPA00671"/>
<dbReference type="GO" id="GO:0051539">
    <property type="term" value="F:4 iron, 4 sulfur cluster binding"/>
    <property type="evidence" value="ECO:0007669"/>
    <property type="project" value="UniProtKB-UniRule"/>
</dbReference>
<dbReference type="GO" id="GO:0005524">
    <property type="term" value="F:ATP binding"/>
    <property type="evidence" value="ECO:0007669"/>
    <property type="project" value="UniProtKB-UniRule"/>
</dbReference>
<dbReference type="GO" id="GO:0046872">
    <property type="term" value="F:metal ion binding"/>
    <property type="evidence" value="ECO:0007669"/>
    <property type="project" value="UniProtKB-KW"/>
</dbReference>
<dbReference type="GO" id="GO:0016730">
    <property type="term" value="F:oxidoreductase activity, acting on iron-sulfur proteins as donors"/>
    <property type="evidence" value="ECO:0007669"/>
    <property type="project" value="InterPro"/>
</dbReference>
<dbReference type="GO" id="GO:0016636">
    <property type="term" value="F:oxidoreductase activity, acting on the CH-CH group of donors, iron-sulfur protein as acceptor"/>
    <property type="evidence" value="ECO:0007669"/>
    <property type="project" value="UniProtKB-UniRule"/>
</dbReference>
<dbReference type="GO" id="GO:0036070">
    <property type="term" value="P:light-independent bacteriochlorophyll biosynthetic process"/>
    <property type="evidence" value="ECO:0007669"/>
    <property type="project" value="UniProtKB-UniRule"/>
</dbReference>
<dbReference type="GO" id="GO:0019685">
    <property type="term" value="P:photosynthesis, dark reaction"/>
    <property type="evidence" value="ECO:0007669"/>
    <property type="project" value="InterPro"/>
</dbReference>
<dbReference type="Gene3D" id="1.20.89.20">
    <property type="match status" value="1"/>
</dbReference>
<dbReference type="Gene3D" id="3.40.50.1980">
    <property type="entry name" value="Nitrogenase molybdenum iron protein domain"/>
    <property type="match status" value="3"/>
</dbReference>
<dbReference type="Gene3D" id="1.10.8.550">
    <property type="entry name" value="Proto-chlorophyllide reductase 57 kD subunit B"/>
    <property type="match status" value="1"/>
</dbReference>
<dbReference type="HAMAP" id="MF_00353">
    <property type="entry name" value="ChlB_BchB"/>
    <property type="match status" value="1"/>
</dbReference>
<dbReference type="InterPro" id="IPR050152">
    <property type="entry name" value="ChlB/BchB/BchZ"/>
</dbReference>
<dbReference type="InterPro" id="IPR013580">
    <property type="entry name" value="LI-POR_suB-like_C"/>
</dbReference>
<dbReference type="InterPro" id="IPR000510">
    <property type="entry name" value="Nase/OxRdtase_comp1"/>
</dbReference>
<dbReference type="InterPro" id="IPR042298">
    <property type="entry name" value="P-CP_red_C"/>
</dbReference>
<dbReference type="InterPro" id="IPR005969">
    <property type="entry name" value="Protochl_reductB"/>
</dbReference>
<dbReference type="InterPro" id="IPR016209">
    <property type="entry name" value="Protochlorophyllide_Rdtase"/>
</dbReference>
<dbReference type="NCBIfam" id="TIGR01278">
    <property type="entry name" value="DPOR_BchB"/>
    <property type="match status" value="1"/>
</dbReference>
<dbReference type="PANTHER" id="PTHR33712">
    <property type="entry name" value="LIGHT-INDEPENDENT PROTOCHLOROPHYLLIDE REDUCTASE SUBUNIT B"/>
    <property type="match status" value="1"/>
</dbReference>
<dbReference type="PANTHER" id="PTHR33712:SF7">
    <property type="entry name" value="LIGHT-INDEPENDENT PROTOCHLOROPHYLLIDE REDUCTASE SUBUNIT B"/>
    <property type="match status" value="1"/>
</dbReference>
<dbReference type="Pfam" id="PF00148">
    <property type="entry name" value="Oxidored_nitro"/>
    <property type="match status" value="1"/>
</dbReference>
<dbReference type="Pfam" id="PF08369">
    <property type="entry name" value="PCP_red"/>
    <property type="match status" value="1"/>
</dbReference>
<dbReference type="PIRSF" id="PIRSF000163">
    <property type="entry name" value="PCP_ChlB"/>
    <property type="match status" value="1"/>
</dbReference>
<dbReference type="SUPFAM" id="SSF53807">
    <property type="entry name" value="Helical backbone' metal receptor"/>
    <property type="match status" value="1"/>
</dbReference>
<organism>
    <name type="scientific">Methylobacterium sp. (strain 4-46)</name>
    <dbReference type="NCBI Taxonomy" id="426117"/>
    <lineage>
        <taxon>Bacteria</taxon>
        <taxon>Pseudomonadati</taxon>
        <taxon>Pseudomonadota</taxon>
        <taxon>Alphaproteobacteria</taxon>
        <taxon>Hyphomicrobiales</taxon>
        <taxon>Methylobacteriaceae</taxon>
        <taxon>Methylobacterium</taxon>
    </lineage>
</organism>
<evidence type="ECO:0000255" key="1">
    <source>
        <dbReference type="HAMAP-Rule" id="MF_00353"/>
    </source>
</evidence>
<comment type="function">
    <text evidence="1">Component of the dark-operative protochlorophyllide reductase (DPOR) that uses Mg-ATP and reduced ferredoxin to reduce ring D of protochlorophyllide (Pchlide) to form chlorophyllide a (Chlide). This reaction is light-independent. The NB-protein (BchN-BchB) is the catalytic component of the complex.</text>
</comment>
<comment type="catalytic activity">
    <reaction evidence="1">
        <text>chlorophyllide a + oxidized 2[4Fe-4S]-[ferredoxin] + 2 ADP + 2 phosphate = protochlorophyllide a + reduced 2[4Fe-4S]-[ferredoxin] + 2 ATP + 2 H2O</text>
        <dbReference type="Rhea" id="RHEA:28202"/>
        <dbReference type="Rhea" id="RHEA-COMP:10002"/>
        <dbReference type="Rhea" id="RHEA-COMP:10004"/>
        <dbReference type="ChEBI" id="CHEBI:15377"/>
        <dbReference type="ChEBI" id="CHEBI:30616"/>
        <dbReference type="ChEBI" id="CHEBI:33722"/>
        <dbReference type="ChEBI" id="CHEBI:33723"/>
        <dbReference type="ChEBI" id="CHEBI:43474"/>
        <dbReference type="ChEBI" id="CHEBI:83348"/>
        <dbReference type="ChEBI" id="CHEBI:83350"/>
        <dbReference type="ChEBI" id="CHEBI:456216"/>
        <dbReference type="EC" id="1.3.7.7"/>
    </reaction>
</comment>
<comment type="cofactor">
    <cofactor evidence="1">
        <name>[4Fe-4S] cluster</name>
        <dbReference type="ChEBI" id="CHEBI:49883"/>
    </cofactor>
    <text evidence="1">Binds 1 [4Fe-4S] cluster per heterodimer. The cluster is bound at the heterodimer interface by residues from both subunits.</text>
</comment>
<comment type="pathway">
    <text evidence="1">Porphyrin-containing compound metabolism; bacteriochlorophyll biosynthesis (light-independent).</text>
</comment>
<comment type="subunit">
    <text evidence="1">Protochlorophyllide reductase is composed of three subunits; BchL, BchN and BchB. Forms a heterotetramer of two BchB and two BchN subunits.</text>
</comment>
<comment type="similarity">
    <text evidence="1">Belongs to the ChlB/BchB/BchZ family.</text>
</comment>
<name>BCHB_METS4</name>
<protein>
    <recommendedName>
        <fullName evidence="1">Light-independent protochlorophyllide reductase subunit B</fullName>
        <shortName evidence="1">DPOR subunit B</shortName>
        <shortName evidence="1">LI-POR subunit B</shortName>
        <ecNumber evidence="1">1.3.7.7</ecNumber>
    </recommendedName>
</protein>
<accession>B0UDK6</accession>
<sequence length="506" mass="55089">MQLTLWTYEGPPHIGAMRVAAAMNGLHYVLHAPQGDTYADLLFTMIERRDSRPPVTYTTFQARDLGADTAELFKRAAAEAYARFRPQAMIVGASCTAELLQDDPAGLARALGLPIPVIPLDLPAYQRKENWGASETFYRLVRALAGPPAARPARAVRSCNILGPTALGFRNRDDLREVRQLLDRLGIPVNVVAPLGASPADLARLGEADFNVVLYPEVARAAAQFLERTHRQPFVEIAPIGVRATRAFVEAVAARAGVDPAPVLADEGSRLPWYARSVDSTYLTGKRVFVFGDATHAVAAARVATAELGFALVGLGTYAREFAREVREEAEAHGLTALVSDDYLAVEEAIAAAQPELVLGTQMERHIAKRLGIPCAVISAPMHVQDVPARHAPQMGFEGANVLFDTLVHPLMMGLEEHLLAMFRDDPEFHDGVAPSHLGGTARDLPAAAPQPAALVWAIEAERELKKVPFFVRGKARSNTERFARERSLPLITVETLYDAKAHFSR</sequence>
<feature type="chain" id="PRO_1000120530" description="Light-independent protochlorophyllide reductase subunit B">
    <location>
        <begin position="1"/>
        <end position="506"/>
    </location>
</feature>
<feature type="active site" description="Proton donor" evidence="1">
    <location>
        <position position="279"/>
    </location>
</feature>
<feature type="binding site" evidence="1">
    <location>
        <position position="36"/>
    </location>
    <ligand>
        <name>[4Fe-4S] cluster</name>
        <dbReference type="ChEBI" id="CHEBI:49883"/>
        <note>ligand shared with heterodimeric partner</note>
    </ligand>
</feature>
<feature type="binding site" evidence="1">
    <location>
        <begin position="414"/>
        <end position="415"/>
    </location>
    <ligand>
        <name>substrate</name>
    </ligand>
</feature>